<accession>B1LH85</accession>
<proteinExistence type="inferred from homology"/>
<comment type="catalytic activity">
    <reaction evidence="1">
        <text>D-arabinose 5-phosphate + phosphoenolpyruvate + H2O = 3-deoxy-alpha-D-manno-2-octulosonate-8-phosphate + phosphate</text>
        <dbReference type="Rhea" id="RHEA:14053"/>
        <dbReference type="ChEBI" id="CHEBI:15377"/>
        <dbReference type="ChEBI" id="CHEBI:43474"/>
        <dbReference type="ChEBI" id="CHEBI:57693"/>
        <dbReference type="ChEBI" id="CHEBI:58702"/>
        <dbReference type="ChEBI" id="CHEBI:85985"/>
        <dbReference type="EC" id="2.5.1.55"/>
    </reaction>
</comment>
<comment type="pathway">
    <text evidence="1">Carbohydrate biosynthesis; 3-deoxy-D-manno-octulosonate biosynthesis; 3-deoxy-D-manno-octulosonate from D-ribulose 5-phosphate: step 2/3.</text>
</comment>
<comment type="pathway">
    <text evidence="1">Bacterial outer membrane biogenesis; lipopolysaccharide biosynthesis.</text>
</comment>
<comment type="subcellular location">
    <subcellularLocation>
        <location evidence="1">Cytoplasm</location>
    </subcellularLocation>
</comment>
<comment type="similarity">
    <text evidence="1">Belongs to the KdsA family.</text>
</comment>
<sequence length="284" mass="30833">MKQKVVSIGDINVANDLPFVLFGGMNVLESRDLAMRICEHYVTVTQKLGIPYVFKASFDKANRSSIHSYRGPGLEEGMKIFQELKQTFGVKIITDVHEPSQAQPVADVVDVIQLPAFLARQTDLVEAMAKTGAVINVKKPQFVSPGQMGNIVDKFKEGGNEKVILCDRGANFGYDNLVVDMLGFSIMKKVSGNSPVIFDVTHALQCRDPFGAASGGRRAQVAELARAGMAVGLAGLFIEAHPDPEHAKCDGPSALPLAKLEPFLKQMKAIDDLVKGFEELDTSK</sequence>
<reference key="1">
    <citation type="journal article" date="2008" name="J. Bacteriol.">
        <title>Insights into the environmental resistance gene pool from the genome sequence of the multidrug-resistant environmental isolate Escherichia coli SMS-3-5.</title>
        <authorList>
            <person name="Fricke W.F."/>
            <person name="Wright M.S."/>
            <person name="Lindell A.H."/>
            <person name="Harkins D.M."/>
            <person name="Baker-Austin C."/>
            <person name="Ravel J."/>
            <person name="Stepanauskas R."/>
        </authorList>
    </citation>
    <scope>NUCLEOTIDE SEQUENCE [LARGE SCALE GENOMIC DNA]</scope>
    <source>
        <strain>SMS-3-5 / SECEC</strain>
    </source>
</reference>
<feature type="chain" id="PRO_1000116880" description="2-dehydro-3-deoxyphosphooctonate aldolase">
    <location>
        <begin position="1"/>
        <end position="284"/>
    </location>
</feature>
<name>KDSA_ECOSM</name>
<dbReference type="EC" id="2.5.1.55" evidence="1"/>
<dbReference type="EMBL" id="CP000970">
    <property type="protein sequence ID" value="ACB20194.1"/>
    <property type="molecule type" value="Genomic_DNA"/>
</dbReference>
<dbReference type="RefSeq" id="WP_000811065.1">
    <property type="nucleotide sequence ID" value="NC_010498.1"/>
</dbReference>
<dbReference type="SMR" id="B1LH85"/>
<dbReference type="GeneID" id="75203328"/>
<dbReference type="KEGG" id="ecm:EcSMS35_1927"/>
<dbReference type="HOGENOM" id="CLU_036666_0_0_6"/>
<dbReference type="UniPathway" id="UPA00030"/>
<dbReference type="UniPathway" id="UPA00357">
    <property type="reaction ID" value="UER00474"/>
</dbReference>
<dbReference type="Proteomes" id="UP000007011">
    <property type="component" value="Chromosome"/>
</dbReference>
<dbReference type="GO" id="GO:0005737">
    <property type="term" value="C:cytoplasm"/>
    <property type="evidence" value="ECO:0007669"/>
    <property type="project" value="UniProtKB-SubCell"/>
</dbReference>
<dbReference type="GO" id="GO:0008676">
    <property type="term" value="F:3-deoxy-8-phosphooctulonate synthase activity"/>
    <property type="evidence" value="ECO:0007669"/>
    <property type="project" value="UniProtKB-UniRule"/>
</dbReference>
<dbReference type="GO" id="GO:0019294">
    <property type="term" value="P:keto-3-deoxy-D-manno-octulosonic acid biosynthetic process"/>
    <property type="evidence" value="ECO:0007669"/>
    <property type="project" value="UniProtKB-UniRule"/>
</dbReference>
<dbReference type="FunFam" id="3.20.20.70:FF:000058">
    <property type="entry name" value="2-dehydro-3-deoxyphosphooctonate aldolase"/>
    <property type="match status" value="1"/>
</dbReference>
<dbReference type="Gene3D" id="3.20.20.70">
    <property type="entry name" value="Aldolase class I"/>
    <property type="match status" value="1"/>
</dbReference>
<dbReference type="HAMAP" id="MF_00056">
    <property type="entry name" value="KDO8P_synth"/>
    <property type="match status" value="1"/>
</dbReference>
<dbReference type="InterPro" id="IPR013785">
    <property type="entry name" value="Aldolase_TIM"/>
</dbReference>
<dbReference type="InterPro" id="IPR006218">
    <property type="entry name" value="DAHP1/KDSA"/>
</dbReference>
<dbReference type="InterPro" id="IPR006269">
    <property type="entry name" value="KDO8P_synthase"/>
</dbReference>
<dbReference type="NCBIfam" id="TIGR01362">
    <property type="entry name" value="KDO8P_synth"/>
    <property type="match status" value="1"/>
</dbReference>
<dbReference type="NCBIfam" id="NF003543">
    <property type="entry name" value="PRK05198.1"/>
    <property type="match status" value="1"/>
</dbReference>
<dbReference type="NCBIfam" id="NF009109">
    <property type="entry name" value="PRK12457.1"/>
    <property type="match status" value="1"/>
</dbReference>
<dbReference type="PANTHER" id="PTHR21057">
    <property type="entry name" value="PHOSPHO-2-DEHYDRO-3-DEOXYHEPTONATE ALDOLASE"/>
    <property type="match status" value="1"/>
</dbReference>
<dbReference type="Pfam" id="PF00793">
    <property type="entry name" value="DAHP_synth_1"/>
    <property type="match status" value="1"/>
</dbReference>
<dbReference type="SUPFAM" id="SSF51569">
    <property type="entry name" value="Aldolase"/>
    <property type="match status" value="1"/>
</dbReference>
<evidence type="ECO:0000255" key="1">
    <source>
        <dbReference type="HAMAP-Rule" id="MF_00056"/>
    </source>
</evidence>
<protein>
    <recommendedName>
        <fullName evidence="1">2-dehydro-3-deoxyphosphooctonate aldolase</fullName>
        <ecNumber evidence="1">2.5.1.55</ecNumber>
    </recommendedName>
    <alternativeName>
        <fullName evidence="1">3-deoxy-D-manno-octulosonic acid 8-phosphate synthase</fullName>
    </alternativeName>
    <alternativeName>
        <fullName evidence="1">KDO-8-phosphate synthase</fullName>
        <shortName evidence="1">KDO 8-P synthase</shortName>
        <shortName evidence="1">KDOPS</shortName>
    </alternativeName>
    <alternativeName>
        <fullName evidence="1">Phospho-2-dehydro-3-deoxyoctonate aldolase</fullName>
    </alternativeName>
</protein>
<gene>
    <name evidence="1" type="primary">kdsA</name>
    <name type="ordered locus">EcSMS35_1927</name>
</gene>
<keyword id="KW-0963">Cytoplasm</keyword>
<keyword id="KW-0448">Lipopolysaccharide biosynthesis</keyword>
<keyword id="KW-0808">Transferase</keyword>
<organism>
    <name type="scientific">Escherichia coli (strain SMS-3-5 / SECEC)</name>
    <dbReference type="NCBI Taxonomy" id="439855"/>
    <lineage>
        <taxon>Bacteria</taxon>
        <taxon>Pseudomonadati</taxon>
        <taxon>Pseudomonadota</taxon>
        <taxon>Gammaproteobacteria</taxon>
        <taxon>Enterobacterales</taxon>
        <taxon>Enterobacteriaceae</taxon>
        <taxon>Escherichia</taxon>
    </lineage>
</organism>